<reference key="1">
    <citation type="journal article" date="2007" name="PLoS Genet.">
        <title>Patterns and implications of gene gain and loss in the evolution of Prochlorococcus.</title>
        <authorList>
            <person name="Kettler G.C."/>
            <person name="Martiny A.C."/>
            <person name="Huang K."/>
            <person name="Zucker J."/>
            <person name="Coleman M.L."/>
            <person name="Rodrigue S."/>
            <person name="Chen F."/>
            <person name="Lapidus A."/>
            <person name="Ferriera S."/>
            <person name="Johnson J."/>
            <person name="Steglich C."/>
            <person name="Church G.M."/>
            <person name="Richardson P."/>
            <person name="Chisholm S.W."/>
        </authorList>
    </citation>
    <scope>NUCLEOTIDE SEQUENCE [LARGE SCALE GENOMIC DNA]</scope>
    <source>
        <strain>MIT 9303</strain>
    </source>
</reference>
<feature type="chain" id="PRO_1000013755" description="tRNA uridine(34) hydroxylase">
    <location>
        <begin position="1"/>
        <end position="310"/>
    </location>
</feature>
<feature type="domain" description="Rhodanese" evidence="1">
    <location>
        <begin position="134"/>
        <end position="232"/>
    </location>
</feature>
<feature type="active site" description="Cysteine persulfide intermediate" evidence="1">
    <location>
        <position position="192"/>
    </location>
</feature>
<sequence length="310" mass="35294">MNLQDDQTSADLFQVATFYSFTAWPEVTITCLLQDLLSLGDEHQLMGTVLLAEEGVNGTICGSVDGVSALLERLERDLIEGLFELKISWTPEQAFRRFKVRRKAEIVTMGLAGLNPSKTVGTYVDAHEWNDLIDDPDTLLIDTRNDYEIAIGEFKGAINPQTKCFRDFPAWVEQQLRSMVKAKTSARIAMYCTGGIRCEKATSYLIEKGFTNVHHLRGGILRYFEEVSQSESRWQGECFVFDQRVALNHQLSPGVYRLCHACGMPLTPEDQAMNSYRTGVQCRHCVDQFSDTDRIRFAERQRQMEHSSRK</sequence>
<accession>A2C8D6</accession>
<dbReference type="EC" id="1.14.-.-" evidence="1"/>
<dbReference type="EMBL" id="CP000554">
    <property type="protein sequence ID" value="ABM77746.1"/>
    <property type="molecule type" value="Genomic_DNA"/>
</dbReference>
<dbReference type="RefSeq" id="WP_011825651.1">
    <property type="nucleotide sequence ID" value="NC_008820.1"/>
</dbReference>
<dbReference type="SMR" id="A2C8D6"/>
<dbReference type="STRING" id="59922.P9303_09971"/>
<dbReference type="KEGG" id="pmf:P9303_09971"/>
<dbReference type="HOGENOM" id="CLU_038878_0_0_3"/>
<dbReference type="BioCyc" id="PMAR59922:G1G80-901-MONOMER"/>
<dbReference type="Proteomes" id="UP000002274">
    <property type="component" value="Chromosome"/>
</dbReference>
<dbReference type="GO" id="GO:0016705">
    <property type="term" value="F:oxidoreductase activity, acting on paired donors, with incorporation or reduction of molecular oxygen"/>
    <property type="evidence" value="ECO:0007669"/>
    <property type="project" value="UniProtKB-UniRule"/>
</dbReference>
<dbReference type="GO" id="GO:0006400">
    <property type="term" value="P:tRNA modification"/>
    <property type="evidence" value="ECO:0007669"/>
    <property type="project" value="UniProtKB-UniRule"/>
</dbReference>
<dbReference type="CDD" id="cd01518">
    <property type="entry name" value="RHOD_YceA"/>
    <property type="match status" value="1"/>
</dbReference>
<dbReference type="Gene3D" id="3.30.70.100">
    <property type="match status" value="1"/>
</dbReference>
<dbReference type="Gene3D" id="3.40.250.10">
    <property type="entry name" value="Rhodanese-like domain"/>
    <property type="match status" value="1"/>
</dbReference>
<dbReference type="HAMAP" id="MF_00469">
    <property type="entry name" value="TrhO"/>
    <property type="match status" value="1"/>
</dbReference>
<dbReference type="InterPro" id="IPR001763">
    <property type="entry name" value="Rhodanese-like_dom"/>
</dbReference>
<dbReference type="InterPro" id="IPR036873">
    <property type="entry name" value="Rhodanese-like_dom_sf"/>
</dbReference>
<dbReference type="InterPro" id="IPR020936">
    <property type="entry name" value="TrhO"/>
</dbReference>
<dbReference type="InterPro" id="IPR040503">
    <property type="entry name" value="TRHO_N"/>
</dbReference>
<dbReference type="NCBIfam" id="NF001136">
    <property type="entry name" value="PRK00142.1-4"/>
    <property type="match status" value="1"/>
</dbReference>
<dbReference type="PANTHER" id="PTHR43268:SF3">
    <property type="entry name" value="RHODANESE-LIKE DOMAIN-CONTAINING PROTEIN 7-RELATED"/>
    <property type="match status" value="1"/>
</dbReference>
<dbReference type="PANTHER" id="PTHR43268">
    <property type="entry name" value="THIOSULFATE SULFURTRANSFERASE/RHODANESE-LIKE DOMAIN-CONTAINING PROTEIN 2"/>
    <property type="match status" value="1"/>
</dbReference>
<dbReference type="Pfam" id="PF00581">
    <property type="entry name" value="Rhodanese"/>
    <property type="match status" value="1"/>
</dbReference>
<dbReference type="Pfam" id="PF17773">
    <property type="entry name" value="UPF0176_N"/>
    <property type="match status" value="1"/>
</dbReference>
<dbReference type="SMART" id="SM00450">
    <property type="entry name" value="RHOD"/>
    <property type="match status" value="1"/>
</dbReference>
<dbReference type="SUPFAM" id="SSF52821">
    <property type="entry name" value="Rhodanese/Cell cycle control phosphatase"/>
    <property type="match status" value="1"/>
</dbReference>
<dbReference type="PROSITE" id="PS50206">
    <property type="entry name" value="RHODANESE_3"/>
    <property type="match status" value="1"/>
</dbReference>
<name>TRHO_PROM3</name>
<gene>
    <name evidence="1" type="primary">trhO</name>
    <name type="ordered locus">P9303_09971</name>
</gene>
<keyword id="KW-0560">Oxidoreductase</keyword>
<keyword id="KW-0819">tRNA processing</keyword>
<proteinExistence type="inferred from homology"/>
<comment type="function">
    <text evidence="1">Catalyzes oxygen-dependent 5-hydroxyuridine (ho5U) modification at position 34 in tRNAs.</text>
</comment>
<comment type="catalytic activity">
    <reaction evidence="1">
        <text>uridine(34) in tRNA + AH2 + O2 = 5-hydroxyuridine(34) in tRNA + A + H2O</text>
        <dbReference type="Rhea" id="RHEA:64224"/>
        <dbReference type="Rhea" id="RHEA-COMP:11727"/>
        <dbReference type="Rhea" id="RHEA-COMP:13381"/>
        <dbReference type="ChEBI" id="CHEBI:13193"/>
        <dbReference type="ChEBI" id="CHEBI:15377"/>
        <dbReference type="ChEBI" id="CHEBI:15379"/>
        <dbReference type="ChEBI" id="CHEBI:17499"/>
        <dbReference type="ChEBI" id="CHEBI:65315"/>
        <dbReference type="ChEBI" id="CHEBI:136877"/>
    </reaction>
</comment>
<comment type="similarity">
    <text evidence="1">Belongs to the TrhO family.</text>
</comment>
<protein>
    <recommendedName>
        <fullName evidence="1">tRNA uridine(34) hydroxylase</fullName>
        <ecNumber evidence="1">1.14.-.-</ecNumber>
    </recommendedName>
    <alternativeName>
        <fullName evidence="1">tRNA hydroxylation protein O</fullName>
    </alternativeName>
</protein>
<organism>
    <name type="scientific">Prochlorococcus marinus (strain MIT 9303)</name>
    <dbReference type="NCBI Taxonomy" id="59922"/>
    <lineage>
        <taxon>Bacteria</taxon>
        <taxon>Bacillati</taxon>
        <taxon>Cyanobacteriota</taxon>
        <taxon>Cyanophyceae</taxon>
        <taxon>Synechococcales</taxon>
        <taxon>Prochlorococcaceae</taxon>
        <taxon>Prochlorococcus</taxon>
    </lineage>
</organism>
<evidence type="ECO:0000255" key="1">
    <source>
        <dbReference type="HAMAP-Rule" id="MF_00469"/>
    </source>
</evidence>